<reference key="1">
    <citation type="journal article" date="2002" name="Nature">
        <title>The genome sequence of Schizosaccharomyces pombe.</title>
        <authorList>
            <person name="Wood V."/>
            <person name="Gwilliam R."/>
            <person name="Rajandream M.A."/>
            <person name="Lyne M.H."/>
            <person name="Lyne R."/>
            <person name="Stewart A."/>
            <person name="Sgouros J.G."/>
            <person name="Peat N."/>
            <person name="Hayles J."/>
            <person name="Baker S.G."/>
            <person name="Basham D."/>
            <person name="Bowman S."/>
            <person name="Brooks K."/>
            <person name="Brown D."/>
            <person name="Brown S."/>
            <person name="Chillingworth T."/>
            <person name="Churcher C.M."/>
            <person name="Collins M."/>
            <person name="Connor R."/>
            <person name="Cronin A."/>
            <person name="Davis P."/>
            <person name="Feltwell T."/>
            <person name="Fraser A."/>
            <person name="Gentles S."/>
            <person name="Goble A."/>
            <person name="Hamlin N."/>
            <person name="Harris D.E."/>
            <person name="Hidalgo J."/>
            <person name="Hodgson G."/>
            <person name="Holroyd S."/>
            <person name="Hornsby T."/>
            <person name="Howarth S."/>
            <person name="Huckle E.J."/>
            <person name="Hunt S."/>
            <person name="Jagels K."/>
            <person name="James K.D."/>
            <person name="Jones L."/>
            <person name="Jones M."/>
            <person name="Leather S."/>
            <person name="McDonald S."/>
            <person name="McLean J."/>
            <person name="Mooney P."/>
            <person name="Moule S."/>
            <person name="Mungall K.L."/>
            <person name="Murphy L.D."/>
            <person name="Niblett D."/>
            <person name="Odell C."/>
            <person name="Oliver K."/>
            <person name="O'Neil S."/>
            <person name="Pearson D."/>
            <person name="Quail M.A."/>
            <person name="Rabbinowitsch E."/>
            <person name="Rutherford K.M."/>
            <person name="Rutter S."/>
            <person name="Saunders D."/>
            <person name="Seeger K."/>
            <person name="Sharp S."/>
            <person name="Skelton J."/>
            <person name="Simmonds M.N."/>
            <person name="Squares R."/>
            <person name="Squares S."/>
            <person name="Stevens K."/>
            <person name="Taylor K."/>
            <person name="Taylor R.G."/>
            <person name="Tivey A."/>
            <person name="Walsh S.V."/>
            <person name="Warren T."/>
            <person name="Whitehead S."/>
            <person name="Woodward J.R."/>
            <person name="Volckaert G."/>
            <person name="Aert R."/>
            <person name="Robben J."/>
            <person name="Grymonprez B."/>
            <person name="Weltjens I."/>
            <person name="Vanstreels E."/>
            <person name="Rieger M."/>
            <person name="Schaefer M."/>
            <person name="Mueller-Auer S."/>
            <person name="Gabel C."/>
            <person name="Fuchs M."/>
            <person name="Duesterhoeft A."/>
            <person name="Fritzc C."/>
            <person name="Holzer E."/>
            <person name="Moestl D."/>
            <person name="Hilbert H."/>
            <person name="Borzym K."/>
            <person name="Langer I."/>
            <person name="Beck A."/>
            <person name="Lehrach H."/>
            <person name="Reinhardt R."/>
            <person name="Pohl T.M."/>
            <person name="Eger P."/>
            <person name="Zimmermann W."/>
            <person name="Wedler H."/>
            <person name="Wambutt R."/>
            <person name="Purnelle B."/>
            <person name="Goffeau A."/>
            <person name="Cadieu E."/>
            <person name="Dreano S."/>
            <person name="Gloux S."/>
            <person name="Lelaure V."/>
            <person name="Mottier S."/>
            <person name="Galibert F."/>
            <person name="Aves S.J."/>
            <person name="Xiang Z."/>
            <person name="Hunt C."/>
            <person name="Moore K."/>
            <person name="Hurst S.M."/>
            <person name="Lucas M."/>
            <person name="Rochet M."/>
            <person name="Gaillardin C."/>
            <person name="Tallada V.A."/>
            <person name="Garzon A."/>
            <person name="Thode G."/>
            <person name="Daga R.R."/>
            <person name="Cruzado L."/>
            <person name="Jimenez J."/>
            <person name="Sanchez M."/>
            <person name="del Rey F."/>
            <person name="Benito J."/>
            <person name="Dominguez A."/>
            <person name="Revuelta J.L."/>
            <person name="Moreno S."/>
            <person name="Armstrong J."/>
            <person name="Forsburg S.L."/>
            <person name="Cerutti L."/>
            <person name="Lowe T."/>
            <person name="McCombie W.R."/>
            <person name="Paulsen I."/>
            <person name="Potashkin J."/>
            <person name="Shpakovski G.V."/>
            <person name="Ussery D."/>
            <person name="Barrell B.G."/>
            <person name="Nurse P."/>
        </authorList>
    </citation>
    <scope>NUCLEOTIDE SEQUENCE [LARGE SCALE GENOMIC DNA]</scope>
    <source>
        <strain>972 / ATCC 24843</strain>
    </source>
</reference>
<reference key="2">
    <citation type="journal article" date="2000" name="Genes Cells">
        <title>Large-scale screening of intracellular protein localization in living fission yeast cells by the use of a GFP-fusion genomic DNA library.</title>
        <authorList>
            <person name="Ding D.-Q."/>
            <person name="Tomita Y."/>
            <person name="Yamamoto A."/>
            <person name="Chikashige Y."/>
            <person name="Haraguchi T."/>
            <person name="Hiraoka Y."/>
        </authorList>
    </citation>
    <scope>NUCLEOTIDE SEQUENCE [LARGE SCALE GENOMIC DNA] OF 812-840</scope>
    <scope>SUBCELLULAR LOCATION</scope>
    <source>
        <strain>ATCC 38364 / 968</strain>
    </source>
</reference>
<reference key="3">
    <citation type="journal article" date="2004" name="J. Cell Sci.">
        <title>Sister-chromatid cohesion mediated by the alternative RF-CCtf18/Dcc1/Ctf8, the helicase Chl1 and the polymerase-alpha-associated protein Ctf4 is essential for chromatid disjunction during meiosis II.</title>
        <authorList>
            <person name="Petronczki M."/>
            <person name="Chwalla B."/>
            <person name="Siomos M.F."/>
            <person name="Yokobayashi S."/>
            <person name="Helmhart W."/>
            <person name="Deutschbauer A.M."/>
            <person name="Davis R.W."/>
            <person name="Watanabe Y."/>
            <person name="Nasmyth K."/>
        </authorList>
    </citation>
    <scope>FUNCTION</scope>
    <scope>IDENTIFICATION IN THE RFC COMPLEX</scope>
</reference>
<reference key="4">
    <citation type="journal article" date="2005" name="Nucleic Acids Res.">
        <title>Contrasting effects of Elg1-RFC and Ctf18-RFC inactivation in the absence of fully functional RFC in fission yeast.</title>
        <authorList>
            <person name="Kim J."/>
            <person name="Robertson K."/>
            <person name="Mylonas K.J.L."/>
            <person name="Gray F.C."/>
            <person name="Charapitsa I."/>
            <person name="MacNeill S.A."/>
        </authorList>
    </citation>
    <scope>FUNCTION</scope>
</reference>
<comment type="function">
    <text evidence="4 5">Essential for the fidelity of chromosome transmission. Required for the DNA replication block checkpoint. Replication factor C (RFC) complex has an essential but redundant activity in sister chromatid cohesion establishment. Acts as a PCNA loader, loading PCNA onto primed templates. An RFC-like complex (ctf18-RFC) is formed where ctf18 replaces rfc1 in the RFC complex along with the association of dcc1 and ctf8. This complex is required for efficient establishment of chromosome cohesion during S-phase.</text>
</comment>
<comment type="subunit">
    <text evidence="7">Component of the ctf18-RFC complex which consists of ctf18, ctf8, dcc1, rfc2, rfc3, rfc4 and rfc5.</text>
</comment>
<comment type="subcellular location">
    <subcellularLocation>
        <location evidence="3">Nucleus</location>
    </subcellularLocation>
</comment>
<comment type="similarity">
    <text evidence="6">Belongs to the activator 1 small subunits family. CTF18 subfamily.</text>
</comment>
<keyword id="KW-0067">ATP-binding</keyword>
<keyword id="KW-0131">Cell cycle</keyword>
<keyword id="KW-0235">DNA replication</keyword>
<keyword id="KW-0238">DNA-binding</keyword>
<keyword id="KW-0547">Nucleotide-binding</keyword>
<keyword id="KW-0539">Nucleus</keyword>
<keyword id="KW-1185">Reference proteome</keyword>
<accession>Q9USQ1</accession>
<accession>Q9UTY7</accession>
<sequence length="960" mass="108651">MDSIPNEDDLEKLLVAEQNVPYGKNYESFEDEENYLLELRNANALENLEHRSIPNDLFHSSQPVGSPTRNGDDIPSTLDLYSSDNAAIDTDISEDETINQRHAPQTDYRYPNTSANPKMGLEESMDIDMPSIDLDISNAAAFPRDSNLLFRNYNSHTKTSEKGSPVNFEKENQDSNVLFSTGRTSVLHIDAEQSQTNNTVTPLKDDALSLFSFENDVNGAVNDNSLDQKLSASKNSQRVSLPFFSKIELDEGSSFSGPKISARTSSGKIIYFPKKKNRHSDGLLLQPKRLADEISQVNEIGKDFNQDLLNSVRIWSENFLIVSKEKSVALKTEKLDSLQITNCTTKPQSQKLWVDTYRPQLFRDLLGDERVHRAAMHWIKAWDPCVFGKSRLQPSKSMRFNPRFTNITSDSDRPDKRIMMLTGLAGAGKTTLAHVIAHQAGYKVLEINASDDRTAHTVHEKVSSAISNHSALSSQPTCVIVDEIDGGDPAFVRALLSLLESDEKATEYSQAGNSKKKKKFKKLCRPIICICNDLYTPALRPLRPYAQIIYFRPPPQASLVGRLRTICRNENIAVDSRSLTLLTDIYNSDIRSCINSLQLLSLNNKRIDSETIKLLQPKSNSFSTSSLIQSLFLQLDNKQIRAIEASQPTYSHLDALLARIDGANDSESVLMNCFHTYLDLPFTDSLLSKPALTSEWLYFFDQLHSQCYKGNYELWRYIPYSIIHFHYLYATPEKCRLPHPPRSDLEALKLYRTRKEILDSFISTLNAYENQMHGERSILLELIRTILITINPTLKQKEDSMPRSALPSKIEHAINILNHYNLRFQQLPVGDGNYVYRLEPPLDELVWDAPTSSYSVRQMLSQELLKKRLADIKKQTLTDNPTSSNSSRKRKDFNSGKAIKRDFFGRIISEPKSEAVTSNNAALNTGDHPVSIKHAINIKFHDGFSNAVRKPISLNEILNF</sequence>
<protein>
    <recommendedName>
        <fullName>Chromosome transmission fidelity protein 18</fullName>
    </recommendedName>
</protein>
<proteinExistence type="evidence at protein level"/>
<dbReference type="EMBL" id="CU329671">
    <property type="protein sequence ID" value="CAB62096.1"/>
    <property type="molecule type" value="Genomic_DNA"/>
</dbReference>
<dbReference type="EMBL" id="AB027926">
    <property type="protein sequence ID" value="BAA87230.1"/>
    <property type="molecule type" value="Genomic_DNA"/>
</dbReference>
<dbReference type="PIR" id="T50383">
    <property type="entry name" value="T50383"/>
</dbReference>
<dbReference type="RefSeq" id="NP_595200.1">
    <property type="nucleotide sequence ID" value="NM_001021106.2"/>
</dbReference>
<dbReference type="SMR" id="Q9USQ1"/>
<dbReference type="BioGRID" id="277784">
    <property type="interactions" value="60"/>
</dbReference>
<dbReference type="FunCoup" id="Q9USQ1">
    <property type="interactions" value="723"/>
</dbReference>
<dbReference type="STRING" id="284812.Q9USQ1"/>
<dbReference type="iPTMnet" id="Q9USQ1"/>
<dbReference type="PaxDb" id="4896-SPBC902.02c.1"/>
<dbReference type="EnsemblFungi" id="SPBC902.02c.1">
    <property type="protein sequence ID" value="SPBC902.02c.1:pep"/>
    <property type="gene ID" value="SPBC902.02c"/>
</dbReference>
<dbReference type="GeneID" id="2541270"/>
<dbReference type="KEGG" id="spo:2541270"/>
<dbReference type="PomBase" id="SPBC902.02c">
    <property type="gene designation" value="ctf18"/>
</dbReference>
<dbReference type="VEuPathDB" id="FungiDB:SPBC902.02c"/>
<dbReference type="eggNOG" id="KOG1969">
    <property type="taxonomic scope" value="Eukaryota"/>
</dbReference>
<dbReference type="HOGENOM" id="CLU_004894_3_1_1"/>
<dbReference type="InParanoid" id="Q9USQ1"/>
<dbReference type="OMA" id="SIIHFHY"/>
<dbReference type="PhylomeDB" id="Q9USQ1"/>
<dbReference type="PRO" id="PR:Q9USQ1"/>
<dbReference type="Proteomes" id="UP000002485">
    <property type="component" value="Chromosome II"/>
</dbReference>
<dbReference type="GO" id="GO:0000785">
    <property type="term" value="C:chromatin"/>
    <property type="evidence" value="ECO:0000314"/>
    <property type="project" value="PomBase"/>
</dbReference>
<dbReference type="GO" id="GO:0031390">
    <property type="term" value="C:Ctf18 RFC-like complex"/>
    <property type="evidence" value="ECO:0000353"/>
    <property type="project" value="PomBase"/>
</dbReference>
<dbReference type="GO" id="GO:0005829">
    <property type="term" value="C:cytosol"/>
    <property type="evidence" value="ECO:0007005"/>
    <property type="project" value="PomBase"/>
</dbReference>
<dbReference type="GO" id="GO:0043596">
    <property type="term" value="C:nuclear replication fork"/>
    <property type="evidence" value="ECO:0000305"/>
    <property type="project" value="PomBase"/>
</dbReference>
<dbReference type="GO" id="GO:0005634">
    <property type="term" value="C:nucleus"/>
    <property type="evidence" value="ECO:0007005"/>
    <property type="project" value="PomBase"/>
</dbReference>
<dbReference type="GO" id="GO:0005524">
    <property type="term" value="F:ATP binding"/>
    <property type="evidence" value="ECO:0007669"/>
    <property type="project" value="UniProtKB-KW"/>
</dbReference>
<dbReference type="GO" id="GO:0016887">
    <property type="term" value="F:ATP hydrolysis activity"/>
    <property type="evidence" value="ECO:0000303"/>
    <property type="project" value="PomBase"/>
</dbReference>
<dbReference type="GO" id="GO:0003677">
    <property type="term" value="F:DNA binding"/>
    <property type="evidence" value="ECO:0000318"/>
    <property type="project" value="GO_Central"/>
</dbReference>
<dbReference type="GO" id="GO:0045005">
    <property type="term" value="P:DNA-templated DNA replication maintenance of fidelity"/>
    <property type="evidence" value="ECO:0000315"/>
    <property type="project" value="PomBase"/>
</dbReference>
<dbReference type="CDD" id="cd00009">
    <property type="entry name" value="AAA"/>
    <property type="match status" value="1"/>
</dbReference>
<dbReference type="CDD" id="cd18140">
    <property type="entry name" value="HLD_clamp_RFC"/>
    <property type="match status" value="1"/>
</dbReference>
<dbReference type="FunFam" id="3.40.50.300:FF:001083">
    <property type="entry name" value="Chromosome transmission fidelity factor 18"/>
    <property type="match status" value="1"/>
</dbReference>
<dbReference type="Gene3D" id="1.10.8.60">
    <property type="match status" value="1"/>
</dbReference>
<dbReference type="Gene3D" id="3.40.50.300">
    <property type="entry name" value="P-loop containing nucleotide triphosphate hydrolases"/>
    <property type="match status" value="1"/>
</dbReference>
<dbReference type="InterPro" id="IPR003593">
    <property type="entry name" value="AAA+_ATPase"/>
</dbReference>
<dbReference type="InterPro" id="IPR003959">
    <property type="entry name" value="ATPase_AAA_core"/>
</dbReference>
<dbReference type="InterPro" id="IPR053016">
    <property type="entry name" value="CTF18-RFC_complex"/>
</dbReference>
<dbReference type="InterPro" id="IPR027417">
    <property type="entry name" value="P-loop_NTPase"/>
</dbReference>
<dbReference type="InterPro" id="IPR047854">
    <property type="entry name" value="RFC_lid"/>
</dbReference>
<dbReference type="PANTHER" id="PTHR46765">
    <property type="entry name" value="P-LOOP CONTAINING NUCLEOSIDE TRIPHOSPHATE HYDROLASES SUPERFAMILY PROTEIN"/>
    <property type="match status" value="1"/>
</dbReference>
<dbReference type="PANTHER" id="PTHR46765:SF1">
    <property type="entry name" value="P-LOOP CONTAINING NUCLEOSIDE TRIPHOSPHATE HYDROLASES SUPERFAMILY PROTEIN"/>
    <property type="match status" value="1"/>
</dbReference>
<dbReference type="Pfam" id="PF00004">
    <property type="entry name" value="AAA"/>
    <property type="match status" value="1"/>
</dbReference>
<dbReference type="SMART" id="SM00382">
    <property type="entry name" value="AAA"/>
    <property type="match status" value="1"/>
</dbReference>
<dbReference type="SUPFAM" id="SSF52540">
    <property type="entry name" value="P-loop containing nucleoside triphosphate hydrolases"/>
    <property type="match status" value="1"/>
</dbReference>
<feature type="chain" id="PRO_0000239058" description="Chromosome transmission fidelity protein 18">
    <location>
        <begin position="1"/>
        <end position="960"/>
    </location>
</feature>
<feature type="region of interest" description="Disordered" evidence="2">
    <location>
        <begin position="56"/>
        <end position="79"/>
    </location>
</feature>
<feature type="region of interest" description="Disordered" evidence="2">
    <location>
        <begin position="91"/>
        <end position="113"/>
    </location>
</feature>
<feature type="compositionally biased region" description="Polar residues" evidence="2">
    <location>
        <begin position="58"/>
        <end position="69"/>
    </location>
</feature>
<feature type="binding site" evidence="1">
    <location>
        <begin position="423"/>
        <end position="430"/>
    </location>
    <ligand>
        <name>ATP</name>
        <dbReference type="ChEBI" id="CHEBI:30616"/>
    </ligand>
</feature>
<feature type="sequence conflict" description="In Ref. 2." evidence="6" ref="2">
    <original>HAINILNHYNLRFQQLPVGDGNYVYRLEP</original>
    <variation>PLEMATMCIGLSRKFQYFYFFLVIANVDR</variation>
    <location>
        <begin position="812"/>
        <end position="840"/>
    </location>
</feature>
<organism>
    <name type="scientific">Schizosaccharomyces pombe (strain 972 / ATCC 24843)</name>
    <name type="common">Fission yeast</name>
    <dbReference type="NCBI Taxonomy" id="284812"/>
    <lineage>
        <taxon>Eukaryota</taxon>
        <taxon>Fungi</taxon>
        <taxon>Dikarya</taxon>
        <taxon>Ascomycota</taxon>
        <taxon>Taphrinomycotina</taxon>
        <taxon>Schizosaccharomycetes</taxon>
        <taxon>Schizosaccharomycetales</taxon>
        <taxon>Schizosaccharomycetaceae</taxon>
        <taxon>Schizosaccharomyces</taxon>
    </lineage>
</organism>
<name>CTF18_SCHPO</name>
<gene>
    <name type="primary">ctf18</name>
    <name type="synonym">chl12</name>
    <name type="ORF">SPBC902.02c</name>
</gene>
<evidence type="ECO:0000255" key="1"/>
<evidence type="ECO:0000256" key="2">
    <source>
        <dbReference type="SAM" id="MobiDB-lite"/>
    </source>
</evidence>
<evidence type="ECO:0000269" key="3">
    <source>
    </source>
</evidence>
<evidence type="ECO:0000269" key="4">
    <source>
    </source>
</evidence>
<evidence type="ECO:0000269" key="5">
    <source>
    </source>
</evidence>
<evidence type="ECO:0000305" key="6"/>
<evidence type="ECO:0000305" key="7">
    <source>
    </source>
</evidence>